<keyword id="KW-0963">Cytoplasm</keyword>
<keyword id="KW-0227">DNA damage</keyword>
<keyword id="KW-0234">DNA repair</keyword>
<keyword id="KW-0378">Hydrolase</keyword>
<keyword id="KW-1185">Reference proteome</keyword>
<sequence length="220" mass="25426">MTWSDILAEEKQKPYFKQILDFLACESAKGKVIFPTKENIFNAFKYTELDNLKVVILGQDPYHNYNQAHGLAFSVQKWVDIPPSLQNIYKELARSIPKFKTPNHGYLVDWAKQGVFLLNTTLTVEAHKANSHKDIGWETFTDTVINKISENKHNVVFMLWGSHARKKKVLIDSSRHLILESTHPSPLSAHRGFLGCNHFVDCNKYLIEKKDQKIDWNLLC</sequence>
<name>UNG_FRATH</name>
<feature type="chain" id="PRO_1000009890" description="Uracil-DNA glycosylase">
    <location>
        <begin position="1"/>
        <end position="220"/>
    </location>
</feature>
<feature type="active site" description="Proton acceptor" evidence="1">
    <location>
        <position position="60"/>
    </location>
</feature>
<protein>
    <recommendedName>
        <fullName evidence="1">Uracil-DNA glycosylase</fullName>
        <shortName evidence="1">UDG</shortName>
        <ecNumber evidence="1">3.2.2.27</ecNumber>
    </recommendedName>
</protein>
<gene>
    <name evidence="1" type="primary">ung</name>
    <name type="ordered locus">FTL_0529</name>
</gene>
<comment type="function">
    <text evidence="1">Excises uracil residues from the DNA which can arise as a result of misincorporation of dUMP residues by DNA polymerase or due to deamination of cytosine.</text>
</comment>
<comment type="catalytic activity">
    <reaction evidence="1">
        <text>Hydrolyzes single-stranded DNA or mismatched double-stranded DNA and polynucleotides, releasing free uracil.</text>
        <dbReference type="EC" id="3.2.2.27"/>
    </reaction>
</comment>
<comment type="subcellular location">
    <subcellularLocation>
        <location evidence="1">Cytoplasm</location>
    </subcellularLocation>
</comment>
<comment type="similarity">
    <text evidence="1">Belongs to the uracil-DNA glycosylase (UDG) superfamily. UNG family.</text>
</comment>
<proteinExistence type="inferred from homology"/>
<accession>Q2A4Q4</accession>
<dbReference type="EC" id="3.2.2.27" evidence="1"/>
<dbReference type="EMBL" id="AM233362">
    <property type="protein sequence ID" value="CAJ78969.1"/>
    <property type="molecule type" value="Genomic_DNA"/>
</dbReference>
<dbReference type="RefSeq" id="WP_003014844.1">
    <property type="nucleotide sequence ID" value="NZ_CP009694.1"/>
</dbReference>
<dbReference type="SMR" id="Q2A4Q4"/>
<dbReference type="KEGG" id="ftl:FTL_0529"/>
<dbReference type="Proteomes" id="UP000001944">
    <property type="component" value="Chromosome"/>
</dbReference>
<dbReference type="GO" id="GO:0005737">
    <property type="term" value="C:cytoplasm"/>
    <property type="evidence" value="ECO:0007669"/>
    <property type="project" value="UniProtKB-SubCell"/>
</dbReference>
<dbReference type="GO" id="GO:0004844">
    <property type="term" value="F:uracil DNA N-glycosylase activity"/>
    <property type="evidence" value="ECO:0007669"/>
    <property type="project" value="UniProtKB-UniRule"/>
</dbReference>
<dbReference type="GO" id="GO:0097510">
    <property type="term" value="P:base-excision repair, AP site formation via deaminated base removal"/>
    <property type="evidence" value="ECO:0007669"/>
    <property type="project" value="TreeGrafter"/>
</dbReference>
<dbReference type="CDD" id="cd10027">
    <property type="entry name" value="UDG-F1-like"/>
    <property type="match status" value="1"/>
</dbReference>
<dbReference type="FunFam" id="3.40.470.10:FF:000001">
    <property type="entry name" value="Uracil-DNA glycosylase"/>
    <property type="match status" value="1"/>
</dbReference>
<dbReference type="Gene3D" id="3.40.470.10">
    <property type="entry name" value="Uracil-DNA glycosylase-like domain"/>
    <property type="match status" value="1"/>
</dbReference>
<dbReference type="HAMAP" id="MF_00148">
    <property type="entry name" value="UDG"/>
    <property type="match status" value="1"/>
</dbReference>
<dbReference type="InterPro" id="IPR002043">
    <property type="entry name" value="UDG_fam1"/>
</dbReference>
<dbReference type="InterPro" id="IPR018085">
    <property type="entry name" value="Ura-DNA_Glyclase_AS"/>
</dbReference>
<dbReference type="InterPro" id="IPR005122">
    <property type="entry name" value="Uracil-DNA_glycosylase-like"/>
</dbReference>
<dbReference type="InterPro" id="IPR036895">
    <property type="entry name" value="Uracil-DNA_glycosylase-like_sf"/>
</dbReference>
<dbReference type="NCBIfam" id="NF003588">
    <property type="entry name" value="PRK05254.1-1"/>
    <property type="match status" value="1"/>
</dbReference>
<dbReference type="NCBIfam" id="NF003589">
    <property type="entry name" value="PRK05254.1-2"/>
    <property type="match status" value="1"/>
</dbReference>
<dbReference type="NCBIfam" id="NF003591">
    <property type="entry name" value="PRK05254.1-4"/>
    <property type="match status" value="1"/>
</dbReference>
<dbReference type="NCBIfam" id="NF003592">
    <property type="entry name" value="PRK05254.1-5"/>
    <property type="match status" value="1"/>
</dbReference>
<dbReference type="NCBIfam" id="TIGR00628">
    <property type="entry name" value="ung"/>
    <property type="match status" value="1"/>
</dbReference>
<dbReference type="PANTHER" id="PTHR11264">
    <property type="entry name" value="URACIL-DNA GLYCOSYLASE"/>
    <property type="match status" value="1"/>
</dbReference>
<dbReference type="PANTHER" id="PTHR11264:SF0">
    <property type="entry name" value="URACIL-DNA GLYCOSYLASE"/>
    <property type="match status" value="1"/>
</dbReference>
<dbReference type="Pfam" id="PF03167">
    <property type="entry name" value="UDG"/>
    <property type="match status" value="1"/>
</dbReference>
<dbReference type="SMART" id="SM00986">
    <property type="entry name" value="UDG"/>
    <property type="match status" value="1"/>
</dbReference>
<dbReference type="SMART" id="SM00987">
    <property type="entry name" value="UreE_C"/>
    <property type="match status" value="1"/>
</dbReference>
<dbReference type="SUPFAM" id="SSF52141">
    <property type="entry name" value="Uracil-DNA glycosylase-like"/>
    <property type="match status" value="1"/>
</dbReference>
<dbReference type="PROSITE" id="PS00130">
    <property type="entry name" value="U_DNA_GLYCOSYLASE"/>
    <property type="match status" value="1"/>
</dbReference>
<reference key="1">
    <citation type="submission" date="2006-03" db="EMBL/GenBank/DDBJ databases">
        <title>Complete genome sequence of Francisella tularensis LVS (Live Vaccine Strain).</title>
        <authorList>
            <person name="Chain P."/>
            <person name="Larimer F."/>
            <person name="Land M."/>
            <person name="Stilwagen S."/>
            <person name="Larsson P."/>
            <person name="Bearden S."/>
            <person name="Chu M."/>
            <person name="Oyston P."/>
            <person name="Forsman M."/>
            <person name="Andersson S."/>
            <person name="Lindler L."/>
            <person name="Titball R."/>
            <person name="Garcia E."/>
        </authorList>
    </citation>
    <scope>NUCLEOTIDE SEQUENCE [LARGE SCALE GENOMIC DNA]</scope>
    <source>
        <strain>LVS</strain>
    </source>
</reference>
<evidence type="ECO:0000255" key="1">
    <source>
        <dbReference type="HAMAP-Rule" id="MF_00148"/>
    </source>
</evidence>
<organism>
    <name type="scientific">Francisella tularensis subsp. holarctica (strain LVS)</name>
    <dbReference type="NCBI Taxonomy" id="376619"/>
    <lineage>
        <taxon>Bacteria</taxon>
        <taxon>Pseudomonadati</taxon>
        <taxon>Pseudomonadota</taxon>
        <taxon>Gammaproteobacteria</taxon>
        <taxon>Thiotrichales</taxon>
        <taxon>Francisellaceae</taxon>
        <taxon>Francisella</taxon>
    </lineage>
</organism>